<gene>
    <name evidence="1" type="primary">rplS</name>
    <name type="ordered locus">Ecaj_0932</name>
</gene>
<evidence type="ECO:0000255" key="1">
    <source>
        <dbReference type="HAMAP-Rule" id="MF_00402"/>
    </source>
</evidence>
<evidence type="ECO:0000305" key="2"/>
<organism>
    <name type="scientific">Ehrlichia canis (strain Jake)</name>
    <dbReference type="NCBI Taxonomy" id="269484"/>
    <lineage>
        <taxon>Bacteria</taxon>
        <taxon>Pseudomonadati</taxon>
        <taxon>Pseudomonadota</taxon>
        <taxon>Alphaproteobacteria</taxon>
        <taxon>Rickettsiales</taxon>
        <taxon>Anaplasmataceae</taxon>
        <taxon>Ehrlichia</taxon>
    </lineage>
</organism>
<proteinExistence type="inferred from homology"/>
<reference key="1">
    <citation type="journal article" date="2006" name="J. Bacteriol.">
        <title>The genome of the obligately intracellular bacterium Ehrlichia canis reveals themes of complex membrane structure and immune evasion strategies.</title>
        <authorList>
            <person name="Mavromatis K."/>
            <person name="Doyle C.K."/>
            <person name="Lykidis A."/>
            <person name="Ivanova N."/>
            <person name="Francino M.P."/>
            <person name="Chain P."/>
            <person name="Shin M."/>
            <person name="Malfatti S."/>
            <person name="Larimer F."/>
            <person name="Copeland A."/>
            <person name="Detter J.C."/>
            <person name="Land M."/>
            <person name="Richardson P.M."/>
            <person name="Yu X.J."/>
            <person name="Walker D.H."/>
            <person name="McBride J.W."/>
            <person name="Kyrpides N.C."/>
        </authorList>
    </citation>
    <scope>NUCLEOTIDE SEQUENCE [LARGE SCALE GENOMIC DNA]</scope>
    <source>
        <strain>Jake</strain>
    </source>
</reference>
<accession>Q3YQP2</accession>
<feature type="chain" id="PRO_0000226846" description="Large ribosomal subunit protein bL19">
    <location>
        <begin position="1"/>
        <end position="125"/>
    </location>
</feature>
<comment type="function">
    <text evidence="1">This protein is located at the 30S-50S ribosomal subunit interface and may play a role in the structure and function of the aminoacyl-tRNA binding site.</text>
</comment>
<comment type="similarity">
    <text evidence="1">Belongs to the bacterial ribosomal protein bL19 family.</text>
</comment>
<name>RL19_EHRCJ</name>
<keyword id="KW-0687">Ribonucleoprotein</keyword>
<keyword id="KW-0689">Ribosomal protein</keyword>
<sequence length="125" mass="14438">MSNLLKEFNEQQMKLLSNKEIPKFSAGDTLRVSMKIFDGVSERIQVFEGVCIKRRNNGLHSSFTLRKISYNESIQLQVFLYSPTVESIEVVKFGKVRRAKLYYMLSLFGKSARIKERSNVARHAS</sequence>
<dbReference type="EMBL" id="CP000107">
    <property type="protein sequence ID" value="AAZ68963.1"/>
    <property type="molecule type" value="Genomic_DNA"/>
</dbReference>
<dbReference type="RefSeq" id="WP_011305036.1">
    <property type="nucleotide sequence ID" value="NC_007354.1"/>
</dbReference>
<dbReference type="SMR" id="Q3YQP2"/>
<dbReference type="FunCoup" id="Q3YQP2">
    <property type="interactions" value="350"/>
</dbReference>
<dbReference type="STRING" id="269484.Ecaj_0932"/>
<dbReference type="KEGG" id="ecn:Ecaj_0932"/>
<dbReference type="eggNOG" id="COG0335">
    <property type="taxonomic scope" value="Bacteria"/>
</dbReference>
<dbReference type="HOGENOM" id="CLU_103507_2_1_5"/>
<dbReference type="InParanoid" id="Q3YQP2"/>
<dbReference type="Proteomes" id="UP000000435">
    <property type="component" value="Chromosome"/>
</dbReference>
<dbReference type="GO" id="GO:0022625">
    <property type="term" value="C:cytosolic large ribosomal subunit"/>
    <property type="evidence" value="ECO:0007669"/>
    <property type="project" value="TreeGrafter"/>
</dbReference>
<dbReference type="GO" id="GO:0003735">
    <property type="term" value="F:structural constituent of ribosome"/>
    <property type="evidence" value="ECO:0007669"/>
    <property type="project" value="InterPro"/>
</dbReference>
<dbReference type="GO" id="GO:0006412">
    <property type="term" value="P:translation"/>
    <property type="evidence" value="ECO:0007669"/>
    <property type="project" value="UniProtKB-UniRule"/>
</dbReference>
<dbReference type="Gene3D" id="2.30.30.790">
    <property type="match status" value="1"/>
</dbReference>
<dbReference type="HAMAP" id="MF_00402">
    <property type="entry name" value="Ribosomal_bL19"/>
    <property type="match status" value="1"/>
</dbReference>
<dbReference type="InterPro" id="IPR001857">
    <property type="entry name" value="Ribosomal_bL19"/>
</dbReference>
<dbReference type="InterPro" id="IPR038657">
    <property type="entry name" value="Ribosomal_bL19_sf"/>
</dbReference>
<dbReference type="InterPro" id="IPR008991">
    <property type="entry name" value="Translation_prot_SH3-like_sf"/>
</dbReference>
<dbReference type="NCBIfam" id="TIGR01024">
    <property type="entry name" value="rplS_bact"/>
    <property type="match status" value="1"/>
</dbReference>
<dbReference type="PANTHER" id="PTHR15680:SF9">
    <property type="entry name" value="LARGE RIBOSOMAL SUBUNIT PROTEIN BL19M"/>
    <property type="match status" value="1"/>
</dbReference>
<dbReference type="PANTHER" id="PTHR15680">
    <property type="entry name" value="RIBOSOMAL PROTEIN L19"/>
    <property type="match status" value="1"/>
</dbReference>
<dbReference type="Pfam" id="PF01245">
    <property type="entry name" value="Ribosomal_L19"/>
    <property type="match status" value="1"/>
</dbReference>
<dbReference type="PIRSF" id="PIRSF002191">
    <property type="entry name" value="Ribosomal_L19"/>
    <property type="match status" value="1"/>
</dbReference>
<dbReference type="PRINTS" id="PR00061">
    <property type="entry name" value="RIBOSOMALL19"/>
</dbReference>
<dbReference type="SUPFAM" id="SSF50104">
    <property type="entry name" value="Translation proteins SH3-like domain"/>
    <property type="match status" value="1"/>
</dbReference>
<protein>
    <recommendedName>
        <fullName evidence="1">Large ribosomal subunit protein bL19</fullName>
    </recommendedName>
    <alternativeName>
        <fullName evidence="2">50S ribosomal protein L19</fullName>
    </alternativeName>
</protein>